<name>MAD1_MOUSE</name>
<reference key="1">
    <citation type="journal article" date="1995" name="Proc. Natl. Acad. Sci. U.S.A.">
        <title>Contrasting roles for Myc and Mad proteins in cellular growth and differentiation.</title>
        <authorList>
            <person name="Chin L."/>
            <person name="Schreiber-Agus N."/>
            <person name="Pellicer I."/>
            <person name="Chen K."/>
            <person name="Lee H.W."/>
            <person name="Dudast M."/>
            <person name="Cordon-Cardo C."/>
            <person name="DePinho R.A."/>
        </authorList>
    </citation>
    <scope>NUCLEOTIDE SEQUENCE [MRNA]</scope>
    <source>
        <tissue>Brain</tissue>
    </source>
</reference>
<reference key="2">
    <citation type="journal article" date="1998" name="Oncogene">
        <title>Sequential expression of the MAD family of transcriptional repressors during differentiation and development.</title>
        <authorList>
            <person name="Queva C."/>
            <person name="Hurlin P.J."/>
            <person name="Foley K.P."/>
            <person name="Eisenman R.N."/>
        </authorList>
    </citation>
    <scope>NUCLEOTIDE SEQUENCE [MRNA]</scope>
    <source>
        <strain>129/Sv</strain>
    </source>
</reference>
<reference key="3">
    <citation type="journal article" date="1995" name="J. Cell Biol.">
        <title>Expression of the mad gene during cell differentiation in vivo and its inhibition of cell growth in vitro.</title>
        <authorList>
            <person name="Vaestrik I."/>
            <person name="Kaipainen A."/>
            <person name="Penttilae T.-L."/>
            <person name="Lymboussakis A."/>
            <person name="Alitalo R."/>
            <person name="Parvinen M."/>
            <person name="Alitalo K."/>
        </authorList>
    </citation>
    <scope>NUCLEOTIDE SEQUENCE [MRNA]</scope>
</reference>
<reference key="4">
    <citation type="journal article" date="1995" name="EMBO J.">
        <title>Mad3 and Mad4: novel Max-interacting transcriptional repressors that suppress c-myc dependent transformation and are expressed during neural and epidermal differentiation.</title>
        <authorList>
            <person name="Hurlin P.J."/>
            <person name="Queva C."/>
            <person name="Koskinen P.J."/>
            <person name="Steingrimsson E."/>
            <person name="Ayer D.E."/>
            <person name="Copeland N.G."/>
            <person name="Jenkins N.A."/>
            <person name="Eisenman R.N."/>
        </authorList>
    </citation>
    <scope>DEVELOPMENTAL STAGE</scope>
</reference>
<reference key="5">
    <citation type="journal article" date="1996" name="EMBO J.">
        <authorList>
            <person name="Hurlin P.J."/>
            <person name="Queva C."/>
            <person name="Koskinen P.J."/>
            <person name="Steingrimsson E."/>
            <person name="Ayer D.E."/>
            <person name="Copeland N.G."/>
            <person name="Jenkins N.A."/>
            <person name="Eisenman R.N."/>
        </authorList>
    </citation>
    <scope>ERRATUM OF PUBMED:8521822</scope>
</reference>
<reference key="6">
    <citation type="journal article" date="1999" name="Oncogene">
        <title>Mmip-2, a novel RING finger protein that interacts with mad members of the Myc oncoprotein network.</title>
        <authorList>
            <person name="Yin X.-Y."/>
            <person name="Gupta K."/>
            <person name="Prochownik E.V."/>
        </authorList>
    </citation>
    <scope>INTERACTION WITH RNF17</scope>
</reference>
<protein>
    <recommendedName>
        <fullName>Max dimerization protein 1</fullName>
        <shortName>Max dimerizer 1</shortName>
    </recommendedName>
    <alternativeName>
        <fullName>Protein MAD</fullName>
    </alternativeName>
</protein>
<comment type="function">
    <text evidence="2">Component of a transcriptional repressor complex together with MAX (By similarity). In complex with MAX binds to the core DNA sequence 5'-CAC[GA]TG-3' (By similarity). Antagonizes MYC transcriptional activity by competing with MYC for MAX binding (By similarity). Binds to the TERT promoter and represses telomerase expression, possibly by interfering with MYC binding (By similarity).</text>
</comment>
<comment type="subunit">
    <text evidence="2 6">Heterodimer with MAX; the interaction is required for DNA-binding (By similarity). DNA binding requires dimerization with another bHLH protein; does not form homodimers, and does not bind to DNA in the absence of MAX in vitro (By similarity). Interacts with RNF17 (PubMed:10597267).</text>
</comment>
<comment type="subcellular location">
    <subcellularLocation>
        <location evidence="2">Nucleus</location>
    </subcellularLocation>
</comment>
<comment type="developmental stage">
    <text evidence="7">Expressed during neural and epidermal differentiation. Primarily expressed in growth-arrested differentiating cells. In the spinal cord at embryonic day 10.5, a strong expressesion seen in the differentiating cells of the intermediate zone at the ventral part of the neural tube and weakly in the ventricular zone. At 11.5 and 12.5 dpc, highly expressed in the intermediate zone and at reduced levels in the ventricular zone that mostly persists in the dorsal part of the neural tube. At 14.5 dpc, expressed throughout the spinal cord. In the developing epidermis at 14.5 dpc, found in the dorsal lateral epidermis. At 17.5 dpc expressed in the cell cycle arrested, differentiating cells of the suprabasal malphigian layer.</text>
</comment>
<comment type="PTM">
    <text evidence="1">Ubiquitinated by BIRC2/c-IAP1, leading to its subsequent degradation by the proteasome.</text>
</comment>
<proteinExistence type="evidence at protein level"/>
<dbReference type="EMBL" id="L38926">
    <property type="protein sequence ID" value="AAB00682.1"/>
    <property type="molecule type" value="mRNA"/>
</dbReference>
<dbReference type="EMBL" id="U20614">
    <property type="protein sequence ID" value="AAA62310.1"/>
    <property type="molecule type" value="mRNA"/>
</dbReference>
<dbReference type="EMBL" id="X83106">
    <property type="protein sequence ID" value="CAA58168.1"/>
    <property type="molecule type" value="mRNA"/>
</dbReference>
<dbReference type="CCDS" id="CCDS51835.1"/>
<dbReference type="PIR" id="A57074">
    <property type="entry name" value="S51642"/>
</dbReference>
<dbReference type="SMR" id="P50538"/>
<dbReference type="ComplexPortal" id="CPX-105">
    <property type="entry name" value="Mad-Max transcriptional repressor complex"/>
</dbReference>
<dbReference type="CORUM" id="P50538"/>
<dbReference type="DIP" id="DIP-864N"/>
<dbReference type="FunCoup" id="P50538">
    <property type="interactions" value="1724"/>
</dbReference>
<dbReference type="STRING" id="10090.ENSMUSP00000001184"/>
<dbReference type="iPTMnet" id="P50538"/>
<dbReference type="PhosphoSitePlus" id="P50538"/>
<dbReference type="PaxDb" id="10090-ENSMUSP00000001184"/>
<dbReference type="ProteomicsDB" id="291998"/>
<dbReference type="AGR" id="MGI:96908"/>
<dbReference type="MGI" id="MGI:96908">
    <property type="gene designation" value="Mxd1"/>
</dbReference>
<dbReference type="eggNOG" id="KOG2483">
    <property type="taxonomic scope" value="Eukaryota"/>
</dbReference>
<dbReference type="InParanoid" id="P50538"/>
<dbReference type="OrthoDB" id="5920083at2759"/>
<dbReference type="PhylomeDB" id="P50538"/>
<dbReference type="ChiTaRS" id="Mxd1">
    <property type="organism name" value="mouse"/>
</dbReference>
<dbReference type="PRO" id="PR:P50538"/>
<dbReference type="Proteomes" id="UP000000589">
    <property type="component" value="Unplaced"/>
</dbReference>
<dbReference type="RNAct" id="P50538">
    <property type="molecule type" value="protein"/>
</dbReference>
<dbReference type="GO" id="GO:0070443">
    <property type="term" value="C:Mad-Max complex"/>
    <property type="evidence" value="ECO:0000266"/>
    <property type="project" value="ComplexPortal"/>
</dbReference>
<dbReference type="GO" id="GO:0003677">
    <property type="term" value="F:DNA binding"/>
    <property type="evidence" value="ECO:0007669"/>
    <property type="project" value="UniProtKB-KW"/>
</dbReference>
<dbReference type="GO" id="GO:0046983">
    <property type="term" value="F:protein dimerization activity"/>
    <property type="evidence" value="ECO:0007669"/>
    <property type="project" value="InterPro"/>
</dbReference>
<dbReference type="GO" id="GO:0000122">
    <property type="term" value="P:negative regulation of transcription by RNA polymerase II"/>
    <property type="evidence" value="ECO:0000266"/>
    <property type="project" value="ComplexPortal"/>
</dbReference>
<dbReference type="CDD" id="cd18931">
    <property type="entry name" value="bHLHzip_Mad1"/>
    <property type="match status" value="1"/>
</dbReference>
<dbReference type="FunFam" id="4.10.280.10:FF:000014">
    <property type="entry name" value="Max dimerization protein 1"/>
    <property type="match status" value="1"/>
</dbReference>
<dbReference type="Gene3D" id="4.10.280.10">
    <property type="entry name" value="Helix-loop-helix DNA-binding domain"/>
    <property type="match status" value="1"/>
</dbReference>
<dbReference type="InterPro" id="IPR011598">
    <property type="entry name" value="bHLH_dom"/>
</dbReference>
<dbReference type="InterPro" id="IPR036638">
    <property type="entry name" value="HLH_DNA-bd_sf"/>
</dbReference>
<dbReference type="InterPro" id="IPR040157">
    <property type="entry name" value="MXD1_bHLHzip"/>
</dbReference>
<dbReference type="PANTHER" id="PTHR11969:SF18">
    <property type="entry name" value="MAX DIMERIZATION PROTEIN 1"/>
    <property type="match status" value="1"/>
</dbReference>
<dbReference type="PANTHER" id="PTHR11969">
    <property type="entry name" value="MAX DIMERIZATION, MAD"/>
    <property type="match status" value="1"/>
</dbReference>
<dbReference type="Pfam" id="PF00010">
    <property type="entry name" value="HLH"/>
    <property type="match status" value="1"/>
</dbReference>
<dbReference type="SMART" id="SM00353">
    <property type="entry name" value="HLH"/>
    <property type="match status" value="1"/>
</dbReference>
<dbReference type="SUPFAM" id="SSF47459">
    <property type="entry name" value="HLH, helix-loop-helix DNA-binding domain"/>
    <property type="match status" value="1"/>
</dbReference>
<dbReference type="PROSITE" id="PS50888">
    <property type="entry name" value="BHLH"/>
    <property type="match status" value="1"/>
</dbReference>
<keyword id="KW-0238">DNA-binding</keyword>
<keyword id="KW-0539">Nucleus</keyword>
<keyword id="KW-1185">Reference proteome</keyword>
<keyword id="KW-0678">Repressor</keyword>
<keyword id="KW-0804">Transcription</keyword>
<keyword id="KW-0805">Transcription regulation</keyword>
<keyword id="KW-0832">Ubl conjugation</keyword>
<accession>P50538</accession>
<accession>Q60798</accession>
<accession>Q61825</accession>
<feature type="chain" id="PRO_0000127265" description="Max dimerization protein 1">
    <location>
        <begin position="1"/>
        <end position="227"/>
    </location>
</feature>
<feature type="domain" description="bHLH" evidence="4">
    <location>
        <begin position="55"/>
        <end position="107"/>
    </location>
</feature>
<feature type="region of interest" description="Disordered" evidence="5">
    <location>
        <begin position="30"/>
        <end position="66"/>
    </location>
</feature>
<feature type="region of interest" description="Disordered" evidence="5">
    <location>
        <begin position="142"/>
        <end position="161"/>
    </location>
</feature>
<feature type="region of interest" description="Disordered" evidence="5">
    <location>
        <begin position="184"/>
        <end position="227"/>
    </location>
</feature>
<feature type="short sequence motif" description="Nuclear localization signal" evidence="3">
    <location>
        <begin position="21"/>
        <end position="48"/>
    </location>
</feature>
<feature type="compositionally biased region" description="Polar residues" evidence="5">
    <location>
        <begin position="198"/>
        <end position="211"/>
    </location>
</feature>
<feature type="compositionally biased region" description="Basic and acidic residues" evidence="5">
    <location>
        <begin position="216"/>
        <end position="227"/>
    </location>
</feature>
<feature type="sequence conflict" description="In Ref. 1; AAB00682." evidence="8" ref="1">
    <original>E</original>
    <variation>A</variation>
    <location>
        <position position="14"/>
    </location>
</feature>
<feature type="sequence conflict" description="In Ref. 3; CAA58168." evidence="8" ref="3">
    <location>
        <position position="160"/>
    </location>
</feature>
<gene>
    <name type="primary">Mxd1</name>
    <name type="synonym">Mad</name>
    <name type="synonym">Mad1</name>
</gene>
<sequence length="227" mass="25562">MATAVGMNIQLLLEAADYLERREREAEHGYASMLPYSKDRDAFKRRNKPKKNSTSSRSTHNEMEKNRRAHLRLCLEKLKGLVPLGPESSRHTTLSLLTKAKLHIKKLEDCDRKAVHQIDQLQREQRHLKRRLEKLGAERTRMDSVGSVVSSERSDSDREELDVDVDVDVDVDVEGTDYLNGDLGWSSSVSDSDERGSMQSLGSDEGYSSATVKRAKLQDGHKAGLGL</sequence>
<organism>
    <name type="scientific">Mus musculus</name>
    <name type="common">Mouse</name>
    <dbReference type="NCBI Taxonomy" id="10090"/>
    <lineage>
        <taxon>Eukaryota</taxon>
        <taxon>Metazoa</taxon>
        <taxon>Chordata</taxon>
        <taxon>Craniata</taxon>
        <taxon>Vertebrata</taxon>
        <taxon>Euteleostomi</taxon>
        <taxon>Mammalia</taxon>
        <taxon>Eutheria</taxon>
        <taxon>Euarchontoglires</taxon>
        <taxon>Glires</taxon>
        <taxon>Rodentia</taxon>
        <taxon>Myomorpha</taxon>
        <taxon>Muroidea</taxon>
        <taxon>Muridae</taxon>
        <taxon>Murinae</taxon>
        <taxon>Mus</taxon>
        <taxon>Mus</taxon>
    </lineage>
</organism>
<evidence type="ECO:0000250" key="1"/>
<evidence type="ECO:0000250" key="2">
    <source>
        <dbReference type="UniProtKB" id="Q05195"/>
    </source>
</evidence>
<evidence type="ECO:0000255" key="3"/>
<evidence type="ECO:0000255" key="4">
    <source>
        <dbReference type="PROSITE-ProRule" id="PRU00981"/>
    </source>
</evidence>
<evidence type="ECO:0000256" key="5">
    <source>
        <dbReference type="SAM" id="MobiDB-lite"/>
    </source>
</evidence>
<evidence type="ECO:0000269" key="6">
    <source>
    </source>
</evidence>
<evidence type="ECO:0000269" key="7">
    <source>
    </source>
</evidence>
<evidence type="ECO:0000305" key="8"/>